<sequence length="277" mass="30931">MNKILEVENLVFKYEKESDVNQLNGVSFSITKGEWVSIIGQNGSGKSTTARLIDGLFEEFEGIVKIDGERLTAENVWNLRRKIGMVFQNPDNQFVGATVEDDVAFGMENQGIPREEMIKRVDEALLAVNMLDFKTREPARLSGGQKQRVAVAGIIALRPEIIILDESTSMLDPTGRSEIMRVIHEIKDKYHLTVLSITHDLDEAASSDRILVMRAGEIIKEAAPSELFATSEDMVEIGLDVPFSSNLMKDLRTNGFDLPEKYLSEDELVELLADKLG</sequence>
<proteinExistence type="inferred from homology"/>
<name>ECFA1_LACLS</name>
<gene>
    <name evidence="1" type="primary">ecfA1</name>
    <name type="synonym">cbiO1</name>
    <name type="ordered locus">LACR_0288</name>
</gene>
<organism>
    <name type="scientific">Lactococcus lactis subsp. cremoris (strain SK11)</name>
    <dbReference type="NCBI Taxonomy" id="272622"/>
    <lineage>
        <taxon>Bacteria</taxon>
        <taxon>Bacillati</taxon>
        <taxon>Bacillota</taxon>
        <taxon>Bacilli</taxon>
        <taxon>Lactobacillales</taxon>
        <taxon>Streptococcaceae</taxon>
        <taxon>Lactococcus</taxon>
        <taxon>Lactococcus cremoris subsp. cremoris</taxon>
    </lineage>
</organism>
<protein>
    <recommendedName>
        <fullName evidence="1">Energy-coupling factor transporter ATP-binding protein EcfA1</fullName>
        <shortName evidence="1">ECF transporter A component EcfA1</shortName>
        <ecNumber evidence="1">7.-.-.-</ecNumber>
    </recommendedName>
</protein>
<reference key="1">
    <citation type="journal article" date="2006" name="Proc. Natl. Acad. Sci. U.S.A.">
        <title>Comparative genomics of the lactic acid bacteria.</title>
        <authorList>
            <person name="Makarova K.S."/>
            <person name="Slesarev A."/>
            <person name="Wolf Y.I."/>
            <person name="Sorokin A."/>
            <person name="Mirkin B."/>
            <person name="Koonin E.V."/>
            <person name="Pavlov A."/>
            <person name="Pavlova N."/>
            <person name="Karamychev V."/>
            <person name="Polouchine N."/>
            <person name="Shakhova V."/>
            <person name="Grigoriev I."/>
            <person name="Lou Y."/>
            <person name="Rohksar D."/>
            <person name="Lucas S."/>
            <person name="Huang K."/>
            <person name="Goodstein D.M."/>
            <person name="Hawkins T."/>
            <person name="Plengvidhya V."/>
            <person name="Welker D."/>
            <person name="Hughes J."/>
            <person name="Goh Y."/>
            <person name="Benson A."/>
            <person name="Baldwin K."/>
            <person name="Lee J.-H."/>
            <person name="Diaz-Muniz I."/>
            <person name="Dosti B."/>
            <person name="Smeianov V."/>
            <person name="Wechter W."/>
            <person name="Barabote R."/>
            <person name="Lorca G."/>
            <person name="Altermann E."/>
            <person name="Barrangou R."/>
            <person name="Ganesan B."/>
            <person name="Xie Y."/>
            <person name="Rawsthorne H."/>
            <person name="Tamir D."/>
            <person name="Parker C."/>
            <person name="Breidt F."/>
            <person name="Broadbent J.R."/>
            <person name="Hutkins R."/>
            <person name="O'Sullivan D."/>
            <person name="Steele J."/>
            <person name="Unlu G."/>
            <person name="Saier M.H. Jr."/>
            <person name="Klaenhammer T."/>
            <person name="Richardson P."/>
            <person name="Kozyavkin S."/>
            <person name="Weimer B.C."/>
            <person name="Mills D.A."/>
        </authorList>
    </citation>
    <scope>NUCLEOTIDE SEQUENCE [LARGE SCALE GENOMIC DNA]</scope>
    <source>
        <strain>SK11</strain>
    </source>
</reference>
<accession>Q032H4</accession>
<evidence type="ECO:0000255" key="1">
    <source>
        <dbReference type="HAMAP-Rule" id="MF_01710"/>
    </source>
</evidence>
<comment type="function">
    <text evidence="1">ATP-binding (A) component of a common energy-coupling factor (ECF) ABC-transporter complex. Unlike classic ABC transporters this ECF transporter provides the energy necessary to transport a number of different substrates.</text>
</comment>
<comment type="subunit">
    <text evidence="1">Forms a stable energy-coupling factor (ECF) transporter complex composed of 2 membrane-embedded substrate-binding proteins (S component), 2 ATP-binding proteins (A component) and 2 transmembrane proteins (T component).</text>
</comment>
<comment type="subcellular location">
    <subcellularLocation>
        <location evidence="1">Cell membrane</location>
        <topology evidence="1">Peripheral membrane protein</topology>
    </subcellularLocation>
</comment>
<comment type="similarity">
    <text evidence="1">Belongs to the ABC transporter superfamily. Energy-coupling factor EcfA family.</text>
</comment>
<keyword id="KW-0067">ATP-binding</keyword>
<keyword id="KW-1003">Cell membrane</keyword>
<keyword id="KW-0472">Membrane</keyword>
<keyword id="KW-0547">Nucleotide-binding</keyword>
<keyword id="KW-1278">Translocase</keyword>
<keyword id="KW-0813">Transport</keyword>
<dbReference type="EC" id="7.-.-.-" evidence="1"/>
<dbReference type="EMBL" id="CP000425">
    <property type="protein sequence ID" value="ABJ71898.1"/>
    <property type="molecule type" value="Genomic_DNA"/>
</dbReference>
<dbReference type="RefSeq" id="WP_011675310.1">
    <property type="nucleotide sequence ID" value="NC_008527.1"/>
</dbReference>
<dbReference type="SMR" id="Q032H4"/>
<dbReference type="KEGG" id="llc:LACR_0288"/>
<dbReference type="HOGENOM" id="CLU_000604_1_22_9"/>
<dbReference type="Proteomes" id="UP000000240">
    <property type="component" value="Chromosome"/>
</dbReference>
<dbReference type="GO" id="GO:0043190">
    <property type="term" value="C:ATP-binding cassette (ABC) transporter complex"/>
    <property type="evidence" value="ECO:0007669"/>
    <property type="project" value="TreeGrafter"/>
</dbReference>
<dbReference type="GO" id="GO:0005524">
    <property type="term" value="F:ATP binding"/>
    <property type="evidence" value="ECO:0007669"/>
    <property type="project" value="UniProtKB-KW"/>
</dbReference>
<dbReference type="GO" id="GO:0016887">
    <property type="term" value="F:ATP hydrolysis activity"/>
    <property type="evidence" value="ECO:0007669"/>
    <property type="project" value="InterPro"/>
</dbReference>
<dbReference type="GO" id="GO:0042626">
    <property type="term" value="F:ATPase-coupled transmembrane transporter activity"/>
    <property type="evidence" value="ECO:0007669"/>
    <property type="project" value="TreeGrafter"/>
</dbReference>
<dbReference type="CDD" id="cd03225">
    <property type="entry name" value="ABC_cobalt_CbiO_domain1"/>
    <property type="match status" value="1"/>
</dbReference>
<dbReference type="FunFam" id="3.40.50.300:FF:000224">
    <property type="entry name" value="Energy-coupling factor transporter ATP-binding protein EcfA"/>
    <property type="match status" value="1"/>
</dbReference>
<dbReference type="Gene3D" id="3.40.50.300">
    <property type="entry name" value="P-loop containing nucleotide triphosphate hydrolases"/>
    <property type="match status" value="1"/>
</dbReference>
<dbReference type="InterPro" id="IPR003593">
    <property type="entry name" value="AAA+_ATPase"/>
</dbReference>
<dbReference type="InterPro" id="IPR003439">
    <property type="entry name" value="ABC_transporter-like_ATP-bd"/>
</dbReference>
<dbReference type="InterPro" id="IPR017871">
    <property type="entry name" value="ABC_transporter-like_CS"/>
</dbReference>
<dbReference type="InterPro" id="IPR015856">
    <property type="entry name" value="ABC_transpr_CbiO/EcfA_su"/>
</dbReference>
<dbReference type="InterPro" id="IPR050095">
    <property type="entry name" value="ECF_ABC_transporter_ATP-bd"/>
</dbReference>
<dbReference type="InterPro" id="IPR030947">
    <property type="entry name" value="EcfA_1"/>
</dbReference>
<dbReference type="InterPro" id="IPR027417">
    <property type="entry name" value="P-loop_NTPase"/>
</dbReference>
<dbReference type="NCBIfam" id="TIGR04520">
    <property type="entry name" value="ECF_ATPase_1"/>
    <property type="match status" value="1"/>
</dbReference>
<dbReference type="NCBIfam" id="NF010156">
    <property type="entry name" value="PRK13635.1"/>
    <property type="match status" value="1"/>
</dbReference>
<dbReference type="NCBIfam" id="NF010167">
    <property type="entry name" value="PRK13648.1"/>
    <property type="match status" value="1"/>
</dbReference>
<dbReference type="PANTHER" id="PTHR43553:SF24">
    <property type="entry name" value="ENERGY-COUPLING FACTOR TRANSPORTER ATP-BINDING PROTEIN ECFA1"/>
    <property type="match status" value="1"/>
</dbReference>
<dbReference type="PANTHER" id="PTHR43553">
    <property type="entry name" value="HEAVY METAL TRANSPORTER"/>
    <property type="match status" value="1"/>
</dbReference>
<dbReference type="Pfam" id="PF00005">
    <property type="entry name" value="ABC_tran"/>
    <property type="match status" value="1"/>
</dbReference>
<dbReference type="SMART" id="SM00382">
    <property type="entry name" value="AAA"/>
    <property type="match status" value="1"/>
</dbReference>
<dbReference type="SUPFAM" id="SSF52540">
    <property type="entry name" value="P-loop containing nucleoside triphosphate hydrolases"/>
    <property type="match status" value="1"/>
</dbReference>
<dbReference type="PROSITE" id="PS00211">
    <property type="entry name" value="ABC_TRANSPORTER_1"/>
    <property type="match status" value="1"/>
</dbReference>
<dbReference type="PROSITE" id="PS50893">
    <property type="entry name" value="ABC_TRANSPORTER_2"/>
    <property type="match status" value="1"/>
</dbReference>
<dbReference type="PROSITE" id="PS51246">
    <property type="entry name" value="CBIO"/>
    <property type="match status" value="1"/>
</dbReference>
<feature type="chain" id="PRO_0000287959" description="Energy-coupling factor transporter ATP-binding protein EcfA1">
    <location>
        <begin position="1"/>
        <end position="277"/>
    </location>
</feature>
<feature type="domain" description="ABC transporter" evidence="1">
    <location>
        <begin position="5"/>
        <end position="240"/>
    </location>
</feature>
<feature type="binding site" evidence="1">
    <location>
        <begin position="40"/>
        <end position="47"/>
    </location>
    <ligand>
        <name>ATP</name>
        <dbReference type="ChEBI" id="CHEBI:30616"/>
    </ligand>
</feature>